<accession>B1GZ43</accession>
<evidence type="ECO:0000255" key="1">
    <source>
        <dbReference type="HAMAP-Rule" id="MF_00036"/>
    </source>
</evidence>
<keyword id="KW-0030">Aminoacyl-tRNA synthetase</keyword>
<keyword id="KW-0067">ATP-binding</keyword>
<keyword id="KW-0963">Cytoplasm</keyword>
<keyword id="KW-0436">Ligase</keyword>
<keyword id="KW-0479">Metal-binding</keyword>
<keyword id="KW-0547">Nucleotide-binding</keyword>
<keyword id="KW-0648">Protein biosynthesis</keyword>
<keyword id="KW-0694">RNA-binding</keyword>
<keyword id="KW-0820">tRNA-binding</keyword>
<keyword id="KW-0862">Zinc</keyword>
<feature type="chain" id="PRO_0000347856" description="Alanine--tRNA ligase">
    <location>
        <begin position="1"/>
        <end position="877"/>
    </location>
</feature>
<feature type="binding site" evidence="1">
    <location>
        <position position="561"/>
    </location>
    <ligand>
        <name>Zn(2+)</name>
        <dbReference type="ChEBI" id="CHEBI:29105"/>
    </ligand>
</feature>
<feature type="binding site" evidence="1">
    <location>
        <position position="565"/>
    </location>
    <ligand>
        <name>Zn(2+)</name>
        <dbReference type="ChEBI" id="CHEBI:29105"/>
    </ligand>
</feature>
<feature type="binding site" evidence="1">
    <location>
        <position position="669"/>
    </location>
    <ligand>
        <name>Zn(2+)</name>
        <dbReference type="ChEBI" id="CHEBI:29105"/>
    </ligand>
</feature>
<feature type="binding site" evidence="1">
    <location>
        <position position="673"/>
    </location>
    <ligand>
        <name>Zn(2+)</name>
        <dbReference type="ChEBI" id="CHEBI:29105"/>
    </ligand>
</feature>
<sequence length="877" mass="97292">MDKLSSKIRAEFLGFFKNSGCAVVPSDSLIPAGDKTLLFTSAGMVQFKQHFLGQSKDSFTRATSCQKCFRTSDIDQVGTTARHLTFFEMLGNFSFGDYFKKEAAAWAWEFLTKNMSLPKDKLYITIYKDDDEVAGIWKNIAPANKIIKMDEKTNFWNMGETGPCGPCSEILIDLGQETGCGSPACCPECNCDRYLEIWNLVFTQFDKQPDGSLKNLPRKNIDTGMGLERLSATVNGRKNVFDTDLFMPVMENAAEILKIKNEGSNISKLRMIADHSRAITFLISDGILPSNEGRGYVLRRILRRALRQGKFYGYNKPYINELVSDVLKIMEGAYPELSSKLSNIRSIVKTEEEKFLETLESGSEILSSLINSYKSKDINIISGKDVFKLYDTYGFPHDLTKEMAFENGLEIDEDKFKFEQKKAQEKSRVAWCGSGERDITFYSILRKKTGDTVFTGYDNYASESRVLALIKDGSEISELKTGDNGEIILSHSSFYAQSGGQSDDKGKIANNSFESIVEYIFKPAGNLFVHKVKVLKGLIKINDAVSTIIDIERRKQIARHHTAAHLLHKALREAFGGHITQAGSLVARDYFRFDFTHFSALKKDDLIKIEKRVNSIIRLNSEVCIETMAIAKARNAGAMALFGEKYGDEVRTVLIKNESGDGNYSMELCGGTHVSRTGDIGIFKIISESSAAAGVRRIEAVAGIAAENYILDEEAVIIKTSKILNASKEELVNKAHKYTSDYKKLENEFKSLKSSLISGEIDSYAKEVKKINGINFLSVIADKADIKALRTISDQLKEKLKSAVLLIVSKNEDRASFILSATADCVQKGINAGKIAKAFAASINGSAGGKPDFAQGGSKDLSNLNDAVKNAHKYILL</sequence>
<reference key="1">
    <citation type="journal article" date="2008" name="Proc. Natl. Acad. Sci. U.S.A.">
        <title>Complete genome of the uncultured termite group 1 bacteria in a single host protist cell.</title>
        <authorList>
            <person name="Hongoh Y."/>
            <person name="Sharma V.K."/>
            <person name="Prakash T."/>
            <person name="Noda S."/>
            <person name="Taylor T.D."/>
            <person name="Kudo T."/>
            <person name="Sakaki Y."/>
            <person name="Toyoda A."/>
            <person name="Hattori M."/>
            <person name="Ohkuma M."/>
        </authorList>
    </citation>
    <scope>NUCLEOTIDE SEQUENCE [LARGE SCALE GENOMIC DNA]</scope>
</reference>
<gene>
    <name evidence="1" type="primary">alaS</name>
    <name type="ordered locus">TGRD_042</name>
</gene>
<dbReference type="EC" id="6.1.1.7" evidence="1"/>
<dbReference type="EMBL" id="AP009510">
    <property type="protein sequence ID" value="BAG13525.1"/>
    <property type="molecule type" value="Genomic_DNA"/>
</dbReference>
<dbReference type="RefSeq" id="WP_015423054.1">
    <property type="nucleotide sequence ID" value="NC_020419.1"/>
</dbReference>
<dbReference type="SMR" id="B1GZ43"/>
<dbReference type="STRING" id="471821.TGRD_042"/>
<dbReference type="KEGG" id="rsd:TGRD_042"/>
<dbReference type="PATRIC" id="fig|471821.5.peg.78"/>
<dbReference type="HOGENOM" id="CLU_004485_1_1_0"/>
<dbReference type="Proteomes" id="UP000001691">
    <property type="component" value="Chromosome"/>
</dbReference>
<dbReference type="GO" id="GO:0005829">
    <property type="term" value="C:cytosol"/>
    <property type="evidence" value="ECO:0007669"/>
    <property type="project" value="TreeGrafter"/>
</dbReference>
<dbReference type="GO" id="GO:0004813">
    <property type="term" value="F:alanine-tRNA ligase activity"/>
    <property type="evidence" value="ECO:0007669"/>
    <property type="project" value="UniProtKB-UniRule"/>
</dbReference>
<dbReference type="GO" id="GO:0002161">
    <property type="term" value="F:aminoacyl-tRNA deacylase activity"/>
    <property type="evidence" value="ECO:0007669"/>
    <property type="project" value="TreeGrafter"/>
</dbReference>
<dbReference type="GO" id="GO:0005524">
    <property type="term" value="F:ATP binding"/>
    <property type="evidence" value="ECO:0007669"/>
    <property type="project" value="UniProtKB-UniRule"/>
</dbReference>
<dbReference type="GO" id="GO:0000049">
    <property type="term" value="F:tRNA binding"/>
    <property type="evidence" value="ECO:0007669"/>
    <property type="project" value="UniProtKB-KW"/>
</dbReference>
<dbReference type="GO" id="GO:0008270">
    <property type="term" value="F:zinc ion binding"/>
    <property type="evidence" value="ECO:0007669"/>
    <property type="project" value="UniProtKB-UniRule"/>
</dbReference>
<dbReference type="GO" id="GO:0006419">
    <property type="term" value="P:alanyl-tRNA aminoacylation"/>
    <property type="evidence" value="ECO:0007669"/>
    <property type="project" value="UniProtKB-UniRule"/>
</dbReference>
<dbReference type="CDD" id="cd00673">
    <property type="entry name" value="AlaRS_core"/>
    <property type="match status" value="1"/>
</dbReference>
<dbReference type="FunFam" id="3.10.310.40:FF:000001">
    <property type="entry name" value="Alanine--tRNA ligase"/>
    <property type="match status" value="1"/>
</dbReference>
<dbReference type="FunFam" id="3.30.54.20:FF:000001">
    <property type="entry name" value="Alanine--tRNA ligase"/>
    <property type="match status" value="1"/>
</dbReference>
<dbReference type="FunFam" id="3.30.930.10:FF:000004">
    <property type="entry name" value="Alanine--tRNA ligase"/>
    <property type="match status" value="1"/>
</dbReference>
<dbReference type="FunFam" id="3.30.980.10:FF:000004">
    <property type="entry name" value="Alanine--tRNA ligase, cytoplasmic"/>
    <property type="match status" value="1"/>
</dbReference>
<dbReference type="Gene3D" id="2.40.30.130">
    <property type="match status" value="1"/>
</dbReference>
<dbReference type="Gene3D" id="3.10.310.40">
    <property type="match status" value="1"/>
</dbReference>
<dbReference type="Gene3D" id="3.30.54.20">
    <property type="match status" value="1"/>
</dbReference>
<dbReference type="Gene3D" id="6.10.250.550">
    <property type="match status" value="1"/>
</dbReference>
<dbReference type="Gene3D" id="3.30.930.10">
    <property type="entry name" value="Bira Bifunctional Protein, Domain 2"/>
    <property type="match status" value="1"/>
</dbReference>
<dbReference type="Gene3D" id="3.30.980.10">
    <property type="entry name" value="Threonyl-trna Synthetase, Chain A, domain 2"/>
    <property type="match status" value="1"/>
</dbReference>
<dbReference type="HAMAP" id="MF_00036_B">
    <property type="entry name" value="Ala_tRNA_synth_B"/>
    <property type="match status" value="1"/>
</dbReference>
<dbReference type="InterPro" id="IPR045864">
    <property type="entry name" value="aa-tRNA-synth_II/BPL/LPL"/>
</dbReference>
<dbReference type="InterPro" id="IPR002318">
    <property type="entry name" value="Ala-tRNA-lgiase_IIc"/>
</dbReference>
<dbReference type="InterPro" id="IPR018162">
    <property type="entry name" value="Ala-tRNA-ligase_IIc_anticod-bd"/>
</dbReference>
<dbReference type="InterPro" id="IPR018165">
    <property type="entry name" value="Ala-tRNA-synth_IIc_core"/>
</dbReference>
<dbReference type="InterPro" id="IPR018164">
    <property type="entry name" value="Ala-tRNA-synth_IIc_N"/>
</dbReference>
<dbReference type="InterPro" id="IPR050058">
    <property type="entry name" value="Ala-tRNA_ligase"/>
</dbReference>
<dbReference type="InterPro" id="IPR023033">
    <property type="entry name" value="Ala_tRNA_ligase_euk/bac"/>
</dbReference>
<dbReference type="InterPro" id="IPR003156">
    <property type="entry name" value="DHHA1_dom"/>
</dbReference>
<dbReference type="InterPro" id="IPR018163">
    <property type="entry name" value="Thr/Ala-tRNA-synth_IIc_edit"/>
</dbReference>
<dbReference type="InterPro" id="IPR009000">
    <property type="entry name" value="Transl_B-barrel_sf"/>
</dbReference>
<dbReference type="InterPro" id="IPR012947">
    <property type="entry name" value="tRNA_SAD"/>
</dbReference>
<dbReference type="NCBIfam" id="TIGR00344">
    <property type="entry name" value="alaS"/>
    <property type="match status" value="1"/>
</dbReference>
<dbReference type="PANTHER" id="PTHR11777:SF9">
    <property type="entry name" value="ALANINE--TRNA LIGASE, CYTOPLASMIC"/>
    <property type="match status" value="1"/>
</dbReference>
<dbReference type="PANTHER" id="PTHR11777">
    <property type="entry name" value="ALANYL-TRNA SYNTHETASE"/>
    <property type="match status" value="1"/>
</dbReference>
<dbReference type="Pfam" id="PF02272">
    <property type="entry name" value="DHHA1"/>
    <property type="match status" value="1"/>
</dbReference>
<dbReference type="Pfam" id="PF01411">
    <property type="entry name" value="tRNA-synt_2c"/>
    <property type="match status" value="1"/>
</dbReference>
<dbReference type="Pfam" id="PF07973">
    <property type="entry name" value="tRNA_SAD"/>
    <property type="match status" value="1"/>
</dbReference>
<dbReference type="PRINTS" id="PR00980">
    <property type="entry name" value="TRNASYNTHALA"/>
</dbReference>
<dbReference type="SMART" id="SM00863">
    <property type="entry name" value="tRNA_SAD"/>
    <property type="match status" value="1"/>
</dbReference>
<dbReference type="SUPFAM" id="SSF55681">
    <property type="entry name" value="Class II aaRS and biotin synthetases"/>
    <property type="match status" value="1"/>
</dbReference>
<dbReference type="SUPFAM" id="SSF101353">
    <property type="entry name" value="Putative anticodon-binding domain of alanyl-tRNA synthetase (AlaRS)"/>
    <property type="match status" value="1"/>
</dbReference>
<dbReference type="SUPFAM" id="SSF55186">
    <property type="entry name" value="ThrRS/AlaRS common domain"/>
    <property type="match status" value="1"/>
</dbReference>
<dbReference type="SUPFAM" id="SSF50447">
    <property type="entry name" value="Translation proteins"/>
    <property type="match status" value="1"/>
</dbReference>
<dbReference type="PROSITE" id="PS50860">
    <property type="entry name" value="AA_TRNA_LIGASE_II_ALA"/>
    <property type="match status" value="1"/>
</dbReference>
<comment type="function">
    <text evidence="1">Catalyzes the attachment of alanine to tRNA(Ala) in a two-step reaction: alanine is first activated by ATP to form Ala-AMP and then transferred to the acceptor end of tRNA(Ala). Also edits incorrectly charged Ser-tRNA(Ala) and Gly-tRNA(Ala) via its editing domain.</text>
</comment>
<comment type="catalytic activity">
    <reaction evidence="1">
        <text>tRNA(Ala) + L-alanine + ATP = L-alanyl-tRNA(Ala) + AMP + diphosphate</text>
        <dbReference type="Rhea" id="RHEA:12540"/>
        <dbReference type="Rhea" id="RHEA-COMP:9657"/>
        <dbReference type="Rhea" id="RHEA-COMP:9923"/>
        <dbReference type="ChEBI" id="CHEBI:30616"/>
        <dbReference type="ChEBI" id="CHEBI:33019"/>
        <dbReference type="ChEBI" id="CHEBI:57972"/>
        <dbReference type="ChEBI" id="CHEBI:78442"/>
        <dbReference type="ChEBI" id="CHEBI:78497"/>
        <dbReference type="ChEBI" id="CHEBI:456215"/>
        <dbReference type="EC" id="6.1.1.7"/>
    </reaction>
</comment>
<comment type="cofactor">
    <cofactor evidence="1">
        <name>Zn(2+)</name>
        <dbReference type="ChEBI" id="CHEBI:29105"/>
    </cofactor>
    <text evidence="1">Binds 1 zinc ion per subunit.</text>
</comment>
<comment type="subcellular location">
    <subcellularLocation>
        <location evidence="1">Cytoplasm</location>
    </subcellularLocation>
</comment>
<comment type="domain">
    <text evidence="1">Consists of three domains; the N-terminal catalytic domain, the editing domain and the C-terminal C-Ala domain. The editing domain removes incorrectly charged amino acids, while the C-Ala domain, along with tRNA(Ala), serves as a bridge to cooperatively bring together the editing and aminoacylation centers thus stimulating deacylation of misacylated tRNAs.</text>
</comment>
<comment type="similarity">
    <text evidence="1">Belongs to the class-II aminoacyl-tRNA synthetase family.</text>
</comment>
<protein>
    <recommendedName>
        <fullName evidence="1">Alanine--tRNA ligase</fullName>
        <ecNumber evidence="1">6.1.1.7</ecNumber>
    </recommendedName>
    <alternativeName>
        <fullName evidence="1">Alanyl-tRNA synthetase</fullName>
        <shortName evidence="1">AlaRS</shortName>
    </alternativeName>
</protein>
<proteinExistence type="inferred from homology"/>
<name>SYA_ENDTX</name>
<organism>
    <name type="scientific">Endomicrobium trichonymphae</name>
    <dbReference type="NCBI Taxonomy" id="1408204"/>
    <lineage>
        <taxon>Bacteria</taxon>
        <taxon>Pseudomonadati</taxon>
        <taxon>Elusimicrobiota</taxon>
        <taxon>Endomicrobiia</taxon>
        <taxon>Endomicrobiales</taxon>
        <taxon>Endomicrobiaceae</taxon>
        <taxon>Candidatus Endomicrobiellum</taxon>
    </lineage>
</organism>